<reference key="1">
    <citation type="journal article" date="2010" name="J. Bacteriol.">
        <title>Whole genome sequences of two Xylella fastidiosa strains (M12 and M23) causing almond leaf scorch disease in California.</title>
        <authorList>
            <person name="Chen J."/>
            <person name="Xie G."/>
            <person name="Han S."/>
            <person name="Chertkov O."/>
            <person name="Sims D."/>
            <person name="Civerolo E.L."/>
        </authorList>
    </citation>
    <scope>NUCLEOTIDE SEQUENCE [LARGE SCALE GENOMIC DNA]</scope>
    <source>
        <strain>M12</strain>
    </source>
</reference>
<name>DCD_XYLFM</name>
<evidence type="ECO:0000255" key="1">
    <source>
        <dbReference type="HAMAP-Rule" id="MF_00146"/>
    </source>
</evidence>
<keyword id="KW-0378">Hydrolase</keyword>
<keyword id="KW-0546">Nucleotide metabolism</keyword>
<keyword id="KW-0547">Nucleotide-binding</keyword>
<feature type="chain" id="PRO_1000096463" description="dCTP deaminase">
    <location>
        <begin position="1"/>
        <end position="191"/>
    </location>
</feature>
<feature type="active site" description="Proton donor/acceptor" evidence="1">
    <location>
        <position position="138"/>
    </location>
</feature>
<feature type="binding site" evidence="1">
    <location>
        <begin position="112"/>
        <end position="117"/>
    </location>
    <ligand>
        <name>dCTP</name>
        <dbReference type="ChEBI" id="CHEBI:61481"/>
    </ligand>
</feature>
<feature type="binding site" evidence="1">
    <location>
        <begin position="136"/>
        <end position="138"/>
    </location>
    <ligand>
        <name>dCTP</name>
        <dbReference type="ChEBI" id="CHEBI:61481"/>
    </ligand>
</feature>
<feature type="binding site" evidence="1">
    <location>
        <position position="157"/>
    </location>
    <ligand>
        <name>dCTP</name>
        <dbReference type="ChEBI" id="CHEBI:61481"/>
    </ligand>
</feature>
<feature type="binding site" evidence="1">
    <location>
        <position position="173"/>
    </location>
    <ligand>
        <name>dCTP</name>
        <dbReference type="ChEBI" id="CHEBI:61481"/>
    </ligand>
</feature>
<feature type="binding site" evidence="1">
    <location>
        <position position="183"/>
    </location>
    <ligand>
        <name>dCTP</name>
        <dbReference type="ChEBI" id="CHEBI:61481"/>
    </ligand>
</feature>
<accession>B0U5C4</accession>
<organism>
    <name type="scientific">Xylella fastidiosa (strain M12)</name>
    <dbReference type="NCBI Taxonomy" id="405440"/>
    <lineage>
        <taxon>Bacteria</taxon>
        <taxon>Pseudomonadati</taxon>
        <taxon>Pseudomonadota</taxon>
        <taxon>Gammaproteobacteria</taxon>
        <taxon>Lysobacterales</taxon>
        <taxon>Lysobacteraceae</taxon>
        <taxon>Xylella</taxon>
    </lineage>
</organism>
<protein>
    <recommendedName>
        <fullName evidence="1">dCTP deaminase</fullName>
        <ecNumber evidence="1">3.5.4.13</ecNumber>
    </recommendedName>
    <alternativeName>
        <fullName evidence="1">Deoxycytidine triphosphate deaminase</fullName>
    </alternativeName>
</protein>
<sequence>MSIKSDRWIRHMAKQHGMIAPFEPGQIKQNTTGQRIVSYGTSSYGYDVRCSREFKIFTNINSTIVDPKQFDNGSFIDVESDVCIIPPNSFALARTIEYFRIPRNVLVICLGKSTYARCGIIVNVTPLEPEWEGHVTLEFSNTTPLPARIYANEGVAQMLFLQADPDDVCETSYRDRNGKYQGQTGVTLPRT</sequence>
<proteinExistence type="inferred from homology"/>
<comment type="function">
    <text evidence="1">Catalyzes the deamination of dCTP to dUTP.</text>
</comment>
<comment type="catalytic activity">
    <reaction evidence="1">
        <text>dCTP + H2O + H(+) = dUTP + NH4(+)</text>
        <dbReference type="Rhea" id="RHEA:22680"/>
        <dbReference type="ChEBI" id="CHEBI:15377"/>
        <dbReference type="ChEBI" id="CHEBI:15378"/>
        <dbReference type="ChEBI" id="CHEBI:28938"/>
        <dbReference type="ChEBI" id="CHEBI:61481"/>
        <dbReference type="ChEBI" id="CHEBI:61555"/>
        <dbReference type="EC" id="3.5.4.13"/>
    </reaction>
</comment>
<comment type="pathway">
    <text evidence="1">Pyrimidine metabolism; dUMP biosynthesis; dUMP from dCTP (dUTP route): step 1/2.</text>
</comment>
<comment type="subunit">
    <text evidence="1">Homotrimer.</text>
</comment>
<comment type="similarity">
    <text evidence="1">Belongs to the dCTP deaminase family.</text>
</comment>
<dbReference type="EC" id="3.5.4.13" evidence="1"/>
<dbReference type="EMBL" id="CP000941">
    <property type="protein sequence ID" value="ACA12942.1"/>
    <property type="molecule type" value="Genomic_DNA"/>
</dbReference>
<dbReference type="RefSeq" id="WP_004084544.1">
    <property type="nucleotide sequence ID" value="NC_010513.1"/>
</dbReference>
<dbReference type="SMR" id="B0U5C4"/>
<dbReference type="KEGG" id="xfm:Xfasm12_2079"/>
<dbReference type="HOGENOM" id="CLU_087476_4_0_6"/>
<dbReference type="UniPathway" id="UPA00610">
    <property type="reaction ID" value="UER00665"/>
</dbReference>
<dbReference type="GO" id="GO:0008829">
    <property type="term" value="F:dCTP deaminase activity"/>
    <property type="evidence" value="ECO:0007669"/>
    <property type="project" value="UniProtKB-UniRule"/>
</dbReference>
<dbReference type="GO" id="GO:0000166">
    <property type="term" value="F:nucleotide binding"/>
    <property type="evidence" value="ECO:0007669"/>
    <property type="project" value="UniProtKB-KW"/>
</dbReference>
<dbReference type="GO" id="GO:0006226">
    <property type="term" value="P:dUMP biosynthetic process"/>
    <property type="evidence" value="ECO:0007669"/>
    <property type="project" value="UniProtKB-UniPathway"/>
</dbReference>
<dbReference type="GO" id="GO:0006229">
    <property type="term" value="P:dUTP biosynthetic process"/>
    <property type="evidence" value="ECO:0007669"/>
    <property type="project" value="UniProtKB-UniRule"/>
</dbReference>
<dbReference type="GO" id="GO:0015949">
    <property type="term" value="P:nucleobase-containing small molecule interconversion"/>
    <property type="evidence" value="ECO:0007669"/>
    <property type="project" value="TreeGrafter"/>
</dbReference>
<dbReference type="CDD" id="cd07557">
    <property type="entry name" value="trimeric_dUTPase"/>
    <property type="match status" value="1"/>
</dbReference>
<dbReference type="FunFam" id="2.70.40.10:FF:000001">
    <property type="entry name" value="dCTP deaminase"/>
    <property type="match status" value="1"/>
</dbReference>
<dbReference type="Gene3D" id="2.70.40.10">
    <property type="match status" value="1"/>
</dbReference>
<dbReference type="HAMAP" id="MF_00146">
    <property type="entry name" value="dCTP_deaminase"/>
    <property type="match status" value="1"/>
</dbReference>
<dbReference type="InterPro" id="IPR011962">
    <property type="entry name" value="dCTP_deaminase"/>
</dbReference>
<dbReference type="InterPro" id="IPR036157">
    <property type="entry name" value="dUTPase-like_sf"/>
</dbReference>
<dbReference type="InterPro" id="IPR033704">
    <property type="entry name" value="dUTPase_trimeric"/>
</dbReference>
<dbReference type="NCBIfam" id="TIGR02274">
    <property type="entry name" value="dCTP_deam"/>
    <property type="match status" value="1"/>
</dbReference>
<dbReference type="PANTHER" id="PTHR42680">
    <property type="entry name" value="DCTP DEAMINASE"/>
    <property type="match status" value="1"/>
</dbReference>
<dbReference type="PANTHER" id="PTHR42680:SF3">
    <property type="entry name" value="DCTP DEAMINASE"/>
    <property type="match status" value="1"/>
</dbReference>
<dbReference type="Pfam" id="PF22769">
    <property type="entry name" value="DCD"/>
    <property type="match status" value="1"/>
</dbReference>
<dbReference type="SUPFAM" id="SSF51283">
    <property type="entry name" value="dUTPase-like"/>
    <property type="match status" value="1"/>
</dbReference>
<gene>
    <name evidence="1" type="primary">dcd</name>
    <name type="ordered locus">Xfasm12_2079</name>
</gene>